<dbReference type="EC" id="5.1.1.1" evidence="1"/>
<dbReference type="EMBL" id="CP000767">
    <property type="protein sequence ID" value="EAT99457.1"/>
    <property type="molecule type" value="Genomic_DNA"/>
</dbReference>
<dbReference type="RefSeq" id="WP_011992537.1">
    <property type="nucleotide sequence ID" value="NC_009715.2"/>
</dbReference>
<dbReference type="SMR" id="A7GZM8"/>
<dbReference type="STRING" id="360105.CCV52592_1338"/>
<dbReference type="KEGG" id="ccv:CCV52592_1338"/>
<dbReference type="HOGENOM" id="CLU_028393_2_2_7"/>
<dbReference type="OrthoDB" id="9813814at2"/>
<dbReference type="UniPathway" id="UPA00042">
    <property type="reaction ID" value="UER00497"/>
</dbReference>
<dbReference type="Proteomes" id="UP000006380">
    <property type="component" value="Chromosome"/>
</dbReference>
<dbReference type="GO" id="GO:0005829">
    <property type="term" value="C:cytosol"/>
    <property type="evidence" value="ECO:0007669"/>
    <property type="project" value="TreeGrafter"/>
</dbReference>
<dbReference type="GO" id="GO:0008784">
    <property type="term" value="F:alanine racemase activity"/>
    <property type="evidence" value="ECO:0007669"/>
    <property type="project" value="UniProtKB-UniRule"/>
</dbReference>
<dbReference type="GO" id="GO:0030170">
    <property type="term" value="F:pyridoxal phosphate binding"/>
    <property type="evidence" value="ECO:0007669"/>
    <property type="project" value="UniProtKB-UniRule"/>
</dbReference>
<dbReference type="GO" id="GO:0030632">
    <property type="term" value="P:D-alanine biosynthetic process"/>
    <property type="evidence" value="ECO:0007669"/>
    <property type="project" value="UniProtKB-UniRule"/>
</dbReference>
<dbReference type="CDD" id="cd00430">
    <property type="entry name" value="PLPDE_III_AR"/>
    <property type="match status" value="1"/>
</dbReference>
<dbReference type="Gene3D" id="3.20.20.10">
    <property type="entry name" value="Alanine racemase"/>
    <property type="match status" value="1"/>
</dbReference>
<dbReference type="Gene3D" id="2.40.37.10">
    <property type="entry name" value="Lyase, Ornithine Decarboxylase, Chain A, domain 1"/>
    <property type="match status" value="1"/>
</dbReference>
<dbReference type="HAMAP" id="MF_01201">
    <property type="entry name" value="Ala_racemase"/>
    <property type="match status" value="1"/>
</dbReference>
<dbReference type="InterPro" id="IPR000821">
    <property type="entry name" value="Ala_racemase"/>
</dbReference>
<dbReference type="InterPro" id="IPR009006">
    <property type="entry name" value="Ala_racemase/Decarboxylase_C"/>
</dbReference>
<dbReference type="InterPro" id="IPR011079">
    <property type="entry name" value="Ala_racemase_C"/>
</dbReference>
<dbReference type="InterPro" id="IPR001608">
    <property type="entry name" value="Ala_racemase_N"/>
</dbReference>
<dbReference type="InterPro" id="IPR020622">
    <property type="entry name" value="Ala_racemase_pyridoxalP-BS"/>
</dbReference>
<dbReference type="InterPro" id="IPR029066">
    <property type="entry name" value="PLP-binding_barrel"/>
</dbReference>
<dbReference type="NCBIfam" id="NF000791">
    <property type="entry name" value="PRK00053.2-2"/>
    <property type="match status" value="1"/>
</dbReference>
<dbReference type="PANTHER" id="PTHR30511">
    <property type="entry name" value="ALANINE RACEMASE"/>
    <property type="match status" value="1"/>
</dbReference>
<dbReference type="PANTHER" id="PTHR30511:SF0">
    <property type="entry name" value="ALANINE RACEMASE, CATABOLIC-RELATED"/>
    <property type="match status" value="1"/>
</dbReference>
<dbReference type="Pfam" id="PF00842">
    <property type="entry name" value="Ala_racemase_C"/>
    <property type="match status" value="1"/>
</dbReference>
<dbReference type="Pfam" id="PF01168">
    <property type="entry name" value="Ala_racemase_N"/>
    <property type="match status" value="1"/>
</dbReference>
<dbReference type="PRINTS" id="PR00992">
    <property type="entry name" value="ALARACEMASE"/>
</dbReference>
<dbReference type="SMART" id="SM01005">
    <property type="entry name" value="Ala_racemase_C"/>
    <property type="match status" value="1"/>
</dbReference>
<dbReference type="SUPFAM" id="SSF50621">
    <property type="entry name" value="Alanine racemase C-terminal domain-like"/>
    <property type="match status" value="1"/>
</dbReference>
<dbReference type="SUPFAM" id="SSF51419">
    <property type="entry name" value="PLP-binding barrel"/>
    <property type="match status" value="1"/>
</dbReference>
<dbReference type="PROSITE" id="PS00395">
    <property type="entry name" value="ALANINE_RACEMASE"/>
    <property type="match status" value="1"/>
</dbReference>
<comment type="function">
    <text evidence="1">Catalyzes the interconversion of L-alanine and D-alanine. May also act on other amino acids.</text>
</comment>
<comment type="catalytic activity">
    <reaction evidence="1">
        <text>L-alanine = D-alanine</text>
        <dbReference type="Rhea" id="RHEA:20249"/>
        <dbReference type="ChEBI" id="CHEBI:57416"/>
        <dbReference type="ChEBI" id="CHEBI:57972"/>
        <dbReference type="EC" id="5.1.1.1"/>
    </reaction>
</comment>
<comment type="cofactor">
    <cofactor evidence="1">
        <name>pyridoxal 5'-phosphate</name>
        <dbReference type="ChEBI" id="CHEBI:597326"/>
    </cofactor>
</comment>
<comment type="pathway">
    <text evidence="1">Amino-acid biosynthesis; D-alanine biosynthesis; D-alanine from L-alanine: step 1/1.</text>
</comment>
<comment type="similarity">
    <text evidence="1">Belongs to the alanine racemase family.</text>
</comment>
<organism>
    <name type="scientific">Campylobacter curvus (strain 525.92)</name>
    <dbReference type="NCBI Taxonomy" id="360105"/>
    <lineage>
        <taxon>Bacteria</taxon>
        <taxon>Pseudomonadati</taxon>
        <taxon>Campylobacterota</taxon>
        <taxon>Epsilonproteobacteria</taxon>
        <taxon>Campylobacterales</taxon>
        <taxon>Campylobacteraceae</taxon>
        <taxon>Campylobacter</taxon>
    </lineage>
</organism>
<accession>A7GZM8</accession>
<feature type="chain" id="PRO_1000138585" description="Alanine racemase">
    <location>
        <begin position="1"/>
        <end position="337"/>
    </location>
</feature>
<feature type="active site" description="Proton acceptor; specific for D-alanine" evidence="1">
    <location>
        <position position="33"/>
    </location>
</feature>
<feature type="active site" description="Proton acceptor; specific for L-alanine" evidence="1">
    <location>
        <position position="246"/>
    </location>
</feature>
<feature type="binding site" evidence="1">
    <location>
        <position position="118"/>
    </location>
    <ligand>
        <name>substrate</name>
    </ligand>
</feature>
<feature type="binding site" evidence="1">
    <location>
        <position position="292"/>
    </location>
    <ligand>
        <name>substrate</name>
    </ligand>
</feature>
<feature type="modified residue" description="N6-(pyridoxal phosphate)lysine" evidence="1">
    <location>
        <position position="33"/>
    </location>
</feature>
<keyword id="KW-0413">Isomerase</keyword>
<keyword id="KW-0663">Pyridoxal phosphate</keyword>
<keyword id="KW-1185">Reference proteome</keyword>
<name>ALR_CAMC5</name>
<gene>
    <name type="primary">alr</name>
    <name type="ordered locus">Ccur92_13660</name>
    <name type="ORF">CCV52592_1338</name>
</gene>
<evidence type="ECO:0000255" key="1">
    <source>
        <dbReference type="HAMAP-Rule" id="MF_01201"/>
    </source>
</evidence>
<proteinExistence type="inferred from homology"/>
<sequence length="337" mass="37868">MSEIRLNKKAYIHNLMQISNKAGGKERVMLVLKDNAYGHGAKLIAAAASEFGIKFCAVKSQSEALEIQRNFEKILILSHIANGDEDQNFIYAINDMKGLNRIKRGTRIHLVIDTNMHRNGLKFSELEAAFGPIKERGLALEGAYTHFRASDEMNADYFVQRQNFKEAKAEILRLCEKFAMPHPIFHSHNSAALERFGEFDDDMVRVGIAQHGYAQFDDSLNLKPVLSLWAQKVSERVLKAGQCVGYGAKFCADKDINIATYDLGYGDGLLRYAGDGELPLANGKAMLGKMSMDSFSCEDAGEWVCVFDDANVWARYFDTINYDILVKLSPNIKRKFV</sequence>
<protein>
    <recommendedName>
        <fullName evidence="1">Alanine racemase</fullName>
        <ecNumber evidence="1">5.1.1.1</ecNumber>
    </recommendedName>
</protein>
<reference key="1">
    <citation type="submission" date="2007-07" db="EMBL/GenBank/DDBJ databases">
        <title>Genome sequence of Campylobacter curvus 525.92 isolated from human feces.</title>
        <authorList>
            <person name="Fouts D.E."/>
            <person name="Mongodin E.F."/>
            <person name="Puiu D."/>
            <person name="Sebastian Y."/>
            <person name="Miller W.G."/>
            <person name="Mandrell R.E."/>
            <person name="Lastovica A.J."/>
            <person name="Nelson K.E."/>
        </authorList>
    </citation>
    <scope>NUCLEOTIDE SEQUENCE [LARGE SCALE GENOMIC DNA]</scope>
    <source>
        <strain>525.92</strain>
    </source>
</reference>